<feature type="chain" id="PRO_0000127794" description="Cytochrome bc1 complex Rieske iron-sulfur subunit">
    <location>
        <begin position="1"/>
        <end position="353"/>
    </location>
</feature>
<feature type="transmembrane region" description="Helical" evidence="2">
    <location>
        <begin position="60"/>
        <end position="80"/>
    </location>
</feature>
<feature type="transmembrane region" description="Helical" evidence="2">
    <location>
        <begin position="99"/>
        <end position="119"/>
    </location>
</feature>
<feature type="transmembrane region" description="Helical" evidence="2">
    <location>
        <begin position="164"/>
        <end position="184"/>
    </location>
</feature>
<feature type="domain" description="Rieske" evidence="3">
    <location>
        <begin position="246"/>
        <end position="336"/>
    </location>
</feature>
<feature type="region of interest" description="Disordered" evidence="4">
    <location>
        <begin position="1"/>
        <end position="51"/>
    </location>
</feature>
<feature type="compositionally biased region" description="Basic and acidic residues" evidence="4">
    <location>
        <begin position="40"/>
        <end position="51"/>
    </location>
</feature>
<feature type="binding site" evidence="3">
    <location>
        <position position="279"/>
    </location>
    <ligand>
        <name>[2Fe-2S] cluster</name>
        <dbReference type="ChEBI" id="CHEBI:190135"/>
    </ligand>
</feature>
<feature type="binding site" evidence="3">
    <location>
        <position position="281"/>
    </location>
    <ligand>
        <name>[2Fe-2S] cluster</name>
        <dbReference type="ChEBI" id="CHEBI:190135"/>
    </ligand>
</feature>
<feature type="binding site" evidence="3">
    <location>
        <position position="298"/>
    </location>
    <ligand>
        <name>[2Fe-2S] cluster</name>
        <dbReference type="ChEBI" id="CHEBI:190135"/>
    </ligand>
</feature>
<feature type="binding site" evidence="3">
    <location>
        <position position="301"/>
    </location>
    <ligand>
        <name>[2Fe-2S] cluster</name>
        <dbReference type="ChEBI" id="CHEBI:190135"/>
    </ligand>
</feature>
<feature type="disulfide bond" evidence="3">
    <location>
        <begin position="284"/>
        <end position="300"/>
    </location>
</feature>
<reference key="1">
    <citation type="journal article" date="2002" name="Nature">
        <title>Complete genome sequence of the model actinomycete Streptomyces coelicolor A3(2).</title>
        <authorList>
            <person name="Bentley S.D."/>
            <person name="Chater K.F."/>
            <person name="Cerdeno-Tarraga A.-M."/>
            <person name="Challis G.L."/>
            <person name="Thomson N.R."/>
            <person name="James K.D."/>
            <person name="Harris D.E."/>
            <person name="Quail M.A."/>
            <person name="Kieser H."/>
            <person name="Harper D."/>
            <person name="Bateman A."/>
            <person name="Brown S."/>
            <person name="Chandra G."/>
            <person name="Chen C.W."/>
            <person name="Collins M."/>
            <person name="Cronin A."/>
            <person name="Fraser A."/>
            <person name="Goble A."/>
            <person name="Hidalgo J."/>
            <person name="Hornsby T."/>
            <person name="Howarth S."/>
            <person name="Huang C.-H."/>
            <person name="Kieser T."/>
            <person name="Larke L."/>
            <person name="Murphy L.D."/>
            <person name="Oliver K."/>
            <person name="O'Neil S."/>
            <person name="Rabbinowitsch E."/>
            <person name="Rajandream M.A."/>
            <person name="Rutherford K.M."/>
            <person name="Rutter S."/>
            <person name="Seeger K."/>
            <person name="Saunders D."/>
            <person name="Sharp S."/>
            <person name="Squares R."/>
            <person name="Squares S."/>
            <person name="Taylor K."/>
            <person name="Warren T."/>
            <person name="Wietzorrek A."/>
            <person name="Woodward J.R."/>
            <person name="Barrell B.G."/>
            <person name="Parkhill J."/>
            <person name="Hopwood D.A."/>
        </authorList>
    </citation>
    <scope>NUCLEOTIDE SEQUENCE [LARGE SCALE GENOMIC DNA]</scope>
    <source>
        <strain>ATCC BAA-471 / A3(2) / M145</strain>
    </source>
</reference>
<gene>
    <name type="primary">qcrA</name>
    <name type="ordered locus">SCO2149</name>
    <name type="ORF">SC6G10.22c</name>
</gene>
<organism>
    <name type="scientific">Streptomyces coelicolor (strain ATCC BAA-471 / A3(2) / M145)</name>
    <dbReference type="NCBI Taxonomy" id="100226"/>
    <lineage>
        <taxon>Bacteria</taxon>
        <taxon>Bacillati</taxon>
        <taxon>Actinomycetota</taxon>
        <taxon>Actinomycetes</taxon>
        <taxon>Kitasatosporales</taxon>
        <taxon>Streptomycetaceae</taxon>
        <taxon>Streptomyces</taxon>
        <taxon>Streptomyces albidoflavus group</taxon>
    </lineage>
</organism>
<name>QCRA_STRCO</name>
<dbReference type="EMBL" id="AL939111">
    <property type="protein sequence ID" value="CAB39876.1"/>
    <property type="molecule type" value="Genomic_DNA"/>
</dbReference>
<dbReference type="PIR" id="T35531">
    <property type="entry name" value="T35531"/>
</dbReference>
<dbReference type="RefSeq" id="NP_626405.1">
    <property type="nucleotide sequence ID" value="NC_003888.3"/>
</dbReference>
<dbReference type="RefSeq" id="WP_003976666.1">
    <property type="nucleotide sequence ID" value="NZ_VNID01000001.1"/>
</dbReference>
<dbReference type="SMR" id="Q9X807"/>
<dbReference type="FunCoup" id="Q9X807">
    <property type="interactions" value="48"/>
</dbReference>
<dbReference type="STRING" id="100226.gene:17759747"/>
<dbReference type="TCDB" id="3.D.3.5.4">
    <property type="family name" value="the proton-translocating quinol:cytochrome c reductase (qcr) superfamily"/>
</dbReference>
<dbReference type="PaxDb" id="100226-SCO2149"/>
<dbReference type="KEGG" id="sco:SCO2149"/>
<dbReference type="PATRIC" id="fig|100226.15.peg.2184"/>
<dbReference type="eggNOG" id="COG0723">
    <property type="taxonomic scope" value="Bacteria"/>
</dbReference>
<dbReference type="HOGENOM" id="CLU_050668_0_0_11"/>
<dbReference type="InParanoid" id="Q9X807"/>
<dbReference type="OrthoDB" id="9802613at2"/>
<dbReference type="PhylomeDB" id="Q9X807"/>
<dbReference type="Proteomes" id="UP000001973">
    <property type="component" value="Chromosome"/>
</dbReference>
<dbReference type="GO" id="GO:0005886">
    <property type="term" value="C:plasma membrane"/>
    <property type="evidence" value="ECO:0000318"/>
    <property type="project" value="GO_Central"/>
</dbReference>
<dbReference type="GO" id="GO:0051537">
    <property type="term" value="F:2 iron, 2 sulfur cluster binding"/>
    <property type="evidence" value="ECO:0007669"/>
    <property type="project" value="UniProtKB-KW"/>
</dbReference>
<dbReference type="GO" id="GO:0046872">
    <property type="term" value="F:metal ion binding"/>
    <property type="evidence" value="ECO:0007669"/>
    <property type="project" value="UniProtKB-KW"/>
</dbReference>
<dbReference type="GO" id="GO:0004497">
    <property type="term" value="F:monooxygenase activity"/>
    <property type="evidence" value="ECO:0007669"/>
    <property type="project" value="UniProtKB-ARBA"/>
</dbReference>
<dbReference type="GO" id="GO:0016491">
    <property type="term" value="F:oxidoreductase activity"/>
    <property type="evidence" value="ECO:0000318"/>
    <property type="project" value="GO_Central"/>
</dbReference>
<dbReference type="GO" id="GO:0016705">
    <property type="term" value="F:oxidoreductase activity, acting on paired donors, with incorporation or reduction of molecular oxygen"/>
    <property type="evidence" value="ECO:0007669"/>
    <property type="project" value="UniProtKB-ARBA"/>
</dbReference>
<dbReference type="CDD" id="cd03467">
    <property type="entry name" value="Rieske"/>
    <property type="match status" value="1"/>
</dbReference>
<dbReference type="FunFam" id="2.102.10.10:FF:000010">
    <property type="entry name" value="Ubiquinol-cytochrome c reductase iron-sulfur subunit"/>
    <property type="match status" value="1"/>
</dbReference>
<dbReference type="Gene3D" id="2.102.10.10">
    <property type="entry name" value="Rieske [2Fe-2S] iron-sulphur domain"/>
    <property type="match status" value="1"/>
</dbReference>
<dbReference type="InterPro" id="IPR045603">
    <property type="entry name" value="QcrA_N"/>
</dbReference>
<dbReference type="InterPro" id="IPR017941">
    <property type="entry name" value="Rieske_2Fe-2S"/>
</dbReference>
<dbReference type="InterPro" id="IPR036922">
    <property type="entry name" value="Rieske_2Fe-2S_sf"/>
</dbReference>
<dbReference type="InterPro" id="IPR014349">
    <property type="entry name" value="Rieske_Fe-S_prot"/>
</dbReference>
<dbReference type="PANTHER" id="PTHR10134">
    <property type="entry name" value="CYTOCHROME B-C1 COMPLEX SUBUNIT RIESKE, MITOCHONDRIAL"/>
    <property type="match status" value="1"/>
</dbReference>
<dbReference type="Pfam" id="PF19297">
    <property type="entry name" value="QcrA_N"/>
    <property type="match status" value="1"/>
</dbReference>
<dbReference type="Pfam" id="PF00355">
    <property type="entry name" value="Rieske"/>
    <property type="match status" value="1"/>
</dbReference>
<dbReference type="SUPFAM" id="SSF50022">
    <property type="entry name" value="ISP domain"/>
    <property type="match status" value="1"/>
</dbReference>
<dbReference type="PROSITE" id="PS51296">
    <property type="entry name" value="RIESKE"/>
    <property type="match status" value="1"/>
</dbReference>
<evidence type="ECO:0000250" key="1">
    <source>
        <dbReference type="UniProtKB" id="P9WH23"/>
    </source>
</evidence>
<evidence type="ECO:0000255" key="2"/>
<evidence type="ECO:0000255" key="3">
    <source>
        <dbReference type="PROSITE-ProRule" id="PRU00628"/>
    </source>
</evidence>
<evidence type="ECO:0000256" key="4">
    <source>
        <dbReference type="SAM" id="MobiDB-lite"/>
    </source>
</evidence>
<evidence type="ECO:0000305" key="5"/>
<protein>
    <recommendedName>
        <fullName>Cytochrome bc1 complex Rieske iron-sulfur subunit</fullName>
    </recommendedName>
    <alternativeName>
        <fullName>Cytochrome bc1 reductase complex subunit QcrA</fullName>
    </alternativeName>
    <alternativeName>
        <fullName>Rieske iron-sulfur protein</fullName>
    </alternativeName>
    <alternativeName>
        <fullName>Ubiquinol--cytochrome c reductase iron-sulfur subunit</fullName>
    </alternativeName>
</protein>
<accession>Q9X807</accession>
<proteinExistence type="inferred from homology"/>
<keyword id="KW-0001">2Fe-2S</keyword>
<keyword id="KW-1003">Cell membrane</keyword>
<keyword id="KW-1015">Disulfide bond</keyword>
<keyword id="KW-0249">Electron transport</keyword>
<keyword id="KW-0408">Iron</keyword>
<keyword id="KW-0411">Iron-sulfur</keyword>
<keyword id="KW-0472">Membrane</keyword>
<keyword id="KW-0479">Metal-binding</keyword>
<keyword id="KW-0560">Oxidoreductase</keyword>
<keyword id="KW-1185">Reference proteome</keyword>
<keyword id="KW-0679">Respiratory chain</keyword>
<keyword id="KW-0812">Transmembrane</keyword>
<keyword id="KW-1133">Transmembrane helix</keyword>
<keyword id="KW-0813">Transport</keyword>
<sequence>MSSQDIPEENLPAEQDRPHGAAARPADETNPFADPGLPPHEPRVQDVDERAAKRSERTVALLFTLSMLATIAFIAAFVAIDVDKSVYIFPLGHISALNFALGMTLGVALFAIGAGAVHWARTLMSDEEVADERHPIEASPEVRAKVHADFKQGAKESVIGRRKLIRNTMLGALTLVPLSGVVLLRDLGPLPGTKLRHTLWSKGKLLVNMNTNEPLRPSDVAVGSLTFAMPEGLEEHDEDFQNEIAKAALMIIRLEPDSIKDKRELEWSHEGIVAYSKICTHVGCPISLYEQQTHHALCPCHQSTFDLADGARVIFGPAGHALPQLRIGVNDEGYLEALGDFEEPVGPAYWERG</sequence>
<comment type="function">
    <text evidence="1">Iron-sulfur subunit of the cytochrome bc1 complex, an essential component of the respiratory electron transport chain required for ATP synthesis. The bc1 complex catalyzes the oxidation of menaquinol and the reduction of cytochrome c in the respiratory chain. The bc1 complex operates through a Q-cycle mechanism that couples electron transfer to generation of the proton gradient that drives ATP synthesis.</text>
</comment>
<comment type="cofactor">
    <cofactor evidence="3">
        <name>[2Fe-2S] cluster</name>
        <dbReference type="ChEBI" id="CHEBI:190135"/>
    </cofactor>
    <text evidence="3">Binds 1 [2Fe-2S] cluster per subunit.</text>
</comment>
<comment type="subunit">
    <text evidence="1">The cytochrome bc1 complex is composed of a cytochrome b (QcrB), the Rieske iron-sulfur protein (QcrA) and a diheme cytochrome c (QcrC) subunit.</text>
</comment>
<comment type="subcellular location">
    <subcellularLocation>
        <location evidence="2">Cell membrane</location>
        <topology evidence="2">Multi-pass membrane protein</topology>
    </subcellularLocation>
</comment>
<comment type="similarity">
    <text evidence="5">Belongs to the Rieske iron-sulfur protein family.</text>
</comment>